<keyword id="KW-0050">Antiport</keyword>
<keyword id="KW-0997">Cell inner membrane</keyword>
<keyword id="KW-1003">Cell membrane</keyword>
<keyword id="KW-0406">Ion transport</keyword>
<keyword id="KW-0472">Membrane</keyword>
<keyword id="KW-0915">Sodium</keyword>
<keyword id="KW-0739">Sodium transport</keyword>
<keyword id="KW-0812">Transmembrane</keyword>
<keyword id="KW-1133">Transmembrane helix</keyword>
<keyword id="KW-0813">Transport</keyword>
<protein>
    <recommendedName>
        <fullName evidence="1">Na(+)/H(+) antiporter NhaB</fullName>
    </recommendedName>
    <alternativeName>
        <fullName evidence="1">Sodium/proton antiporter NhaB</fullName>
    </alternativeName>
</protein>
<feature type="chain" id="PRO_0000333146" description="Na(+)/H(+) antiporter NhaB">
    <location>
        <begin position="1"/>
        <end position="530"/>
    </location>
</feature>
<feature type="transmembrane region" description="Helical" evidence="1">
    <location>
        <begin position="23"/>
        <end position="43"/>
    </location>
</feature>
<feature type="transmembrane region" description="Helical" evidence="1">
    <location>
        <begin position="45"/>
        <end position="65"/>
    </location>
</feature>
<feature type="transmembrane region" description="Helical" evidence="1">
    <location>
        <begin position="90"/>
        <end position="110"/>
    </location>
</feature>
<feature type="transmembrane region" description="Helical" evidence="1">
    <location>
        <begin position="113"/>
        <end position="133"/>
    </location>
</feature>
<feature type="transmembrane region" description="Helical" evidence="1">
    <location>
        <begin position="140"/>
        <end position="160"/>
    </location>
</feature>
<feature type="transmembrane region" description="Helical" evidence="1">
    <location>
        <begin position="205"/>
        <end position="225"/>
    </location>
</feature>
<feature type="transmembrane region" description="Helical" evidence="1">
    <location>
        <begin position="238"/>
        <end position="258"/>
    </location>
</feature>
<feature type="transmembrane region" description="Helical" evidence="1">
    <location>
        <begin position="308"/>
        <end position="328"/>
    </location>
</feature>
<feature type="transmembrane region" description="Helical" evidence="1">
    <location>
        <begin position="351"/>
        <end position="371"/>
    </location>
</feature>
<feature type="transmembrane region" description="Helical" evidence="1">
    <location>
        <begin position="451"/>
        <end position="471"/>
    </location>
</feature>
<feature type="transmembrane region" description="Helical" evidence="1">
    <location>
        <begin position="479"/>
        <end position="499"/>
    </location>
</feature>
<dbReference type="EMBL" id="CP000627">
    <property type="protein sequence ID" value="ABQ20827.1"/>
    <property type="molecule type" value="Genomic_DNA"/>
</dbReference>
<dbReference type="EMBL" id="CP001235">
    <property type="protein sequence ID" value="ACP10009.1"/>
    <property type="molecule type" value="Genomic_DNA"/>
</dbReference>
<dbReference type="RefSeq" id="WP_001132255.1">
    <property type="nucleotide sequence ID" value="NZ_JAACZH010000001.1"/>
</dbReference>
<dbReference type="SMR" id="A5F6Z3"/>
<dbReference type="GeneID" id="69719470"/>
<dbReference type="KEGG" id="vco:VC0395_A1491"/>
<dbReference type="KEGG" id="vcr:VC395_2016"/>
<dbReference type="PATRIC" id="fig|345073.21.peg.1949"/>
<dbReference type="eggNOG" id="COG3067">
    <property type="taxonomic scope" value="Bacteria"/>
</dbReference>
<dbReference type="HOGENOM" id="CLU_041110_0_0_6"/>
<dbReference type="OrthoDB" id="5288732at2"/>
<dbReference type="Proteomes" id="UP000000249">
    <property type="component" value="Chromosome 2"/>
</dbReference>
<dbReference type="GO" id="GO:0005886">
    <property type="term" value="C:plasma membrane"/>
    <property type="evidence" value="ECO:0007669"/>
    <property type="project" value="UniProtKB-SubCell"/>
</dbReference>
<dbReference type="GO" id="GO:0015385">
    <property type="term" value="F:sodium:proton antiporter activity"/>
    <property type="evidence" value="ECO:0007669"/>
    <property type="project" value="InterPro"/>
</dbReference>
<dbReference type="HAMAP" id="MF_01599">
    <property type="entry name" value="NhaB"/>
    <property type="match status" value="1"/>
</dbReference>
<dbReference type="InterPro" id="IPR004671">
    <property type="entry name" value="Na+/H+_antiporter_NhaB"/>
</dbReference>
<dbReference type="NCBIfam" id="TIGR00774">
    <property type="entry name" value="NhaB"/>
    <property type="match status" value="1"/>
</dbReference>
<dbReference type="NCBIfam" id="NF007093">
    <property type="entry name" value="PRK09547.1"/>
    <property type="match status" value="1"/>
</dbReference>
<dbReference type="PANTHER" id="PTHR43302:SF1">
    <property type="entry name" value="NA(+)_H(+) ANTIPORTER NHAB"/>
    <property type="match status" value="1"/>
</dbReference>
<dbReference type="PANTHER" id="PTHR43302">
    <property type="entry name" value="TRANSPORTER ARSB-RELATED"/>
    <property type="match status" value="1"/>
</dbReference>
<dbReference type="Pfam" id="PF06450">
    <property type="entry name" value="NhaB"/>
    <property type="match status" value="1"/>
</dbReference>
<organism>
    <name type="scientific">Vibrio cholerae serotype O1 (strain ATCC 39541 / Classical Ogawa 395 / O395)</name>
    <dbReference type="NCBI Taxonomy" id="345073"/>
    <lineage>
        <taxon>Bacteria</taxon>
        <taxon>Pseudomonadati</taxon>
        <taxon>Pseudomonadota</taxon>
        <taxon>Gammaproteobacteria</taxon>
        <taxon>Vibrionales</taxon>
        <taxon>Vibrionaceae</taxon>
        <taxon>Vibrio</taxon>
    </lineage>
</organism>
<evidence type="ECO:0000255" key="1">
    <source>
        <dbReference type="HAMAP-Rule" id="MF_01599"/>
    </source>
</evidence>
<sequence length="530" mass="57661">MPMSLGNAFIKNFLGKAPDWYKVAIIAFLIINPIVFFFINPFLAGWLLVVEFIFTLAMALKCYPLQPGGLLAIEAIAIGMTSPGQVKHELVANIEVLLLLVFMVAGIYFMKQLLLFIFTKILLGIRSKVLLSIAFSVTAAFLSAFLDALTVIAVIISVAVGFYSIYHKVASGQSVHSSHDHTHDEGISELTRDDLENYRAFLRSLLMHAGVGTALGGVTTMVGEPQNLIIADQAGWQFGEFLLRMAPVTVPVFIAGMLTCMLVEKFRIFGYGARLPANVRQILLDFDSEERKNRTNQDVAKLWVQGAIAVWLIVGLALHLAAVGLIGLSVIILATAFTGVIEEHSLGKAFEEALPFTALLAVFFSIVAVIIDQELFKPVIDAVLNVEDHGTQLALFYVANGLLSMVSDNVFVGTVYITEVKTALMEGMISRDQFDLLAVAINTGTNLPSVATPNGQAAFLFLLTSALAPLIRLSYGRMVIMAFPYTLALSLVGFIGIMFLLEPMTEVFYSLGWISHHVAPAADALLQSGH</sequence>
<comment type="function">
    <text evidence="1">Na(+)/H(+) antiporter that extrudes sodium in exchange for external protons.</text>
</comment>
<comment type="catalytic activity">
    <reaction evidence="1">
        <text>2 Na(+)(in) + 3 H(+)(out) = 2 Na(+)(out) + 3 H(+)(in)</text>
        <dbReference type="Rhea" id="RHEA:29247"/>
        <dbReference type="ChEBI" id="CHEBI:15378"/>
        <dbReference type="ChEBI" id="CHEBI:29101"/>
    </reaction>
    <physiologicalReaction direction="left-to-right" evidence="1">
        <dbReference type="Rhea" id="RHEA:29248"/>
    </physiologicalReaction>
</comment>
<comment type="subcellular location">
    <subcellularLocation>
        <location evidence="1">Cell inner membrane</location>
        <topology evidence="1">Multi-pass membrane protein</topology>
    </subcellularLocation>
</comment>
<comment type="similarity">
    <text evidence="1">Belongs to the NhaB Na(+)/H(+) (TC 2.A.34) antiporter family.</text>
</comment>
<name>NHAB_VIBC3</name>
<accession>A5F6Z3</accession>
<accession>C3M1V4</accession>
<proteinExistence type="inferred from homology"/>
<reference key="1">
    <citation type="submission" date="2007-03" db="EMBL/GenBank/DDBJ databases">
        <authorList>
            <person name="Heidelberg J."/>
        </authorList>
    </citation>
    <scope>NUCLEOTIDE SEQUENCE [LARGE SCALE GENOMIC DNA]</scope>
    <source>
        <strain>ATCC 39541 / Classical Ogawa 395 / O395</strain>
    </source>
</reference>
<reference key="2">
    <citation type="journal article" date="2008" name="PLoS ONE">
        <title>A recalibrated molecular clock and independent origins for the cholera pandemic clones.</title>
        <authorList>
            <person name="Feng L."/>
            <person name="Reeves P.R."/>
            <person name="Lan R."/>
            <person name="Ren Y."/>
            <person name="Gao C."/>
            <person name="Zhou Z."/>
            <person name="Ren Y."/>
            <person name="Cheng J."/>
            <person name="Wang W."/>
            <person name="Wang J."/>
            <person name="Qian W."/>
            <person name="Li D."/>
            <person name="Wang L."/>
        </authorList>
    </citation>
    <scope>NUCLEOTIDE SEQUENCE [LARGE SCALE GENOMIC DNA]</scope>
    <source>
        <strain>ATCC 39541 / Classical Ogawa 395 / O395</strain>
    </source>
</reference>
<gene>
    <name evidence="1" type="primary">nhaB</name>
    <name type="ordered locus">VC0395_A1491</name>
    <name type="ordered locus">VC395_2016</name>
</gene>